<keyword id="KW-0106">Calcium</keyword>
<keyword id="KW-0903">Direct protein sequencing</keyword>
<keyword id="KW-1015">Disulfide bond</keyword>
<keyword id="KW-1206">Fibrinogenolytic toxin</keyword>
<keyword id="KW-1205">Fibrinolytic toxin</keyword>
<keyword id="KW-0325">Glycoprotein</keyword>
<keyword id="KW-1200">Hemorrhagic toxin</keyword>
<keyword id="KW-1199">Hemostasis impairing toxin</keyword>
<keyword id="KW-0378">Hydrolase</keyword>
<keyword id="KW-0479">Metal-binding</keyword>
<keyword id="KW-0482">Metalloprotease</keyword>
<keyword id="KW-1201">Platelet aggregation inhibiting toxin</keyword>
<keyword id="KW-0645">Protease</keyword>
<keyword id="KW-0964">Secreted</keyword>
<keyword id="KW-0800">Toxin</keyword>
<keyword id="KW-0862">Zinc</keyword>
<reference key="1">
    <citation type="journal article" date="2007" name="Arch. Biochem. Biophys.">
        <title>Structural and functional characterization of a P-III metalloproteinase, leucurolysin-B, from Bothrops leucurus venom.</title>
        <authorList>
            <person name="Sanchez E.F."/>
            <person name="Gabriel L.M."/>
            <person name="Gontijo S."/>
            <person name="Gremski L.H."/>
            <person name="Veiga S.S."/>
            <person name="Evangelista K.S."/>
            <person name="Eble J.A."/>
            <person name="Richardson M."/>
        </authorList>
    </citation>
    <scope>PROTEIN SEQUENCE</scope>
    <scope>FUNCTION</scope>
    <scope>ACTIVITY REGULATION</scope>
    <scope>BIOPHYSICOCHEMICAL PROPERTIES</scope>
    <scope>SUBUNIT</scope>
    <scope>SUBCELLULAR LOCATION</scope>
    <scope>TISSUE SPECIFICITY</scope>
    <scope>GLYCOSYLATION</scope>
    <source>
        <tissue evidence="8">Venom</tissue>
    </source>
</reference>
<comment type="function">
    <text evidence="8">Snake venom zinc metalloproteinase that acts as a potent hemorrhagic toxin. Hydrolyzes the insulin B chain at the 14-Ala-|-Leu-15 bond but not the 16-Tyr-|-Leu-17 bond. Degrades the alpha-chain of fibrin and hydrolyzes the Aalpha-chain of fibrinogen (FGA) while leaving the beta and gamma chains unaffected. Degrades type-I collagen and its gelatin. Degrades the alpha-1 chain of type-IV collagen and its gelatin but not the alpha-2 chain. Degrades plasma fibronectin, plasma vitronectin and basement membrane enactin. It inhibits collagen-induced platelet aggregation.</text>
</comment>
<comment type="cofactor">
    <cofactor evidence="3">
        <name>Zn(2+)</name>
        <dbReference type="ChEBI" id="CHEBI:29105"/>
    </cofactor>
    <text evidence="3">Binds 1 zinc ion per subunit.</text>
</comment>
<comment type="activity regulation">
    <text evidence="8">Inhibited by EDTA, but not by PMSF. Pre-incubation with 2 mM DTT completely abolishes activity.</text>
</comment>
<comment type="biophysicochemical properties">
    <phDependence>
        <text evidence="8">Optimum pH is 7.5-9.3 with dimethyl casein as substrate.</text>
    </phDependence>
    <temperatureDependence>
        <text evidence="8">Optimum temperature is 30 degrees Celsius with dimethyl casein as substrate.</text>
    </temperatureDependence>
</comment>
<comment type="subunit">
    <text evidence="8">Monomer.</text>
</comment>
<comment type="subcellular location">
    <subcellularLocation>
        <location evidence="8">Secreted</location>
    </subcellularLocation>
</comment>
<comment type="tissue specificity">
    <text evidence="8">Expressed by the venom gland.</text>
</comment>
<comment type="PTM">
    <text evidence="8">N-glycosylated.</text>
</comment>
<comment type="PTM">
    <text evidence="8 10">The N-terminus is blocked.</text>
</comment>
<comment type="miscellaneous">
    <text evidence="11">Negative results: does not interact with alpha-1/beta-1 or alpha-2/beta-1 integrin.</text>
</comment>
<comment type="similarity">
    <text evidence="10">Belongs to the venom metalloproteinase (M12B) family. P-III subfamily. P-IIIa sub-subfamily.</text>
</comment>
<sequence length="324" mass="36262">DTVLLNRISHDNAQLLAIVFNENVIGKAYTGGMCDPRYSVGVVMDHSPINRLVADTMAHEMGHNLGIHHDTGSCSCGGHSCIMSRVISHQPLQYFSNCSYIEYWDFITKLNPQCILNEPLRTDIVSPPVCGNELLEMGEECDCGSPRNCRDLCCDAATCKLHSWVECESGECCDQCRFIKAGNVCRPPRKECDVAEACTGQSAQCPTDDFKRNGQPCLNNYAYCYQGNCPIMYHQCYALFGSDATMAQDSCFQVNKKGNEYFYCRLENGINIPCAQEDVKCGRLFCHNMKYEQDCNYSDRGMVDNGTKCAEGKVCNSNRQAYQR</sequence>
<feature type="chain" id="PRO_0000363164" description="Zinc metalloproteinase leucurolysin-B">
    <location>
        <begin position="1" status="less than"/>
        <end position="324"/>
    </location>
</feature>
<feature type="domain" description="Peptidase M12B" evidence="6">
    <location>
        <begin position="1" status="less than"/>
        <end position="119"/>
    </location>
</feature>
<feature type="domain" description="Disintegrin" evidence="5">
    <location>
        <begin position="127"/>
        <end position="213"/>
    </location>
</feature>
<feature type="short sequence motif" description="D/ECD-tripeptide">
    <location>
        <begin position="191"/>
        <end position="193"/>
    </location>
</feature>
<feature type="active site" evidence="6 7">
    <location>
        <position position="60"/>
    </location>
</feature>
<feature type="binding site" evidence="1">
    <location>
        <position position="11"/>
    </location>
    <ligand>
        <name>Ca(2+)</name>
        <dbReference type="ChEBI" id="CHEBI:29108"/>
        <label>1</label>
    </ligand>
</feature>
<feature type="binding site" evidence="3">
    <location>
        <position position="59"/>
    </location>
    <ligand>
        <name>Zn(2+)</name>
        <dbReference type="ChEBI" id="CHEBI:29105"/>
        <note>catalytic</note>
    </ligand>
</feature>
<feature type="binding site" evidence="3">
    <location>
        <position position="63"/>
    </location>
    <ligand>
        <name>Zn(2+)</name>
        <dbReference type="ChEBI" id="CHEBI:29105"/>
        <note>catalytic</note>
    </ligand>
</feature>
<feature type="binding site" evidence="3">
    <location>
        <position position="69"/>
    </location>
    <ligand>
        <name>Zn(2+)</name>
        <dbReference type="ChEBI" id="CHEBI:29105"/>
        <note>catalytic</note>
    </ligand>
</feature>
<feature type="binding site" evidence="1">
    <location>
        <position position="114"/>
    </location>
    <ligand>
        <name>Ca(2+)</name>
        <dbReference type="ChEBI" id="CHEBI:29108"/>
        <label>1</label>
    </ligand>
</feature>
<feature type="binding site" evidence="1">
    <location>
        <position position="117"/>
    </location>
    <ligand>
        <name>Ca(2+)</name>
        <dbReference type="ChEBI" id="CHEBI:29108"/>
        <label>1</label>
    </ligand>
</feature>
<feature type="binding site" evidence="1">
    <location>
        <position position="129"/>
    </location>
    <ligand>
        <name>Ca(2+)</name>
        <dbReference type="ChEBI" id="CHEBI:29108"/>
        <label>2</label>
    </ligand>
</feature>
<feature type="binding site" evidence="1">
    <location>
        <position position="132"/>
    </location>
    <ligand>
        <name>Ca(2+)</name>
        <dbReference type="ChEBI" id="CHEBI:29108"/>
        <label>2</label>
    </ligand>
</feature>
<feature type="binding site" evidence="1">
    <location>
        <position position="134"/>
    </location>
    <ligand>
        <name>Ca(2+)</name>
        <dbReference type="ChEBI" id="CHEBI:29108"/>
        <label>2</label>
    </ligand>
</feature>
<feature type="binding site" evidence="1">
    <location>
        <position position="136"/>
    </location>
    <ligand>
        <name>Ca(2+)</name>
        <dbReference type="ChEBI" id="CHEBI:29108"/>
        <label>2</label>
    </ligand>
</feature>
<feature type="binding site" evidence="1">
    <location>
        <position position="139"/>
    </location>
    <ligand>
        <name>Ca(2+)</name>
        <dbReference type="ChEBI" id="CHEBI:29108"/>
        <label>2</label>
    </ligand>
</feature>
<feature type="binding site" evidence="1">
    <location>
        <position position="142"/>
    </location>
    <ligand>
        <name>Ca(2+)</name>
        <dbReference type="ChEBI" id="CHEBI:29108"/>
        <label>2</label>
    </ligand>
</feature>
<feature type="glycosylation site" description="N-linked (GlcNAc...) asparagine" evidence="4">
    <location>
        <position position="97"/>
    </location>
</feature>
<feature type="glycosylation site" description="N-linked (GlcNAc...) asparagine" evidence="4">
    <location>
        <position position="296"/>
    </location>
</feature>
<feature type="glycosylation site" description="N-linked (GlcNAc...) asparagine" evidence="4">
    <location>
        <position position="305"/>
    </location>
</feature>
<feature type="disulfide bond" evidence="2">
    <location>
        <begin position="34"/>
        <end position="114"/>
    </location>
</feature>
<feature type="disulfide bond" evidence="2">
    <location>
        <begin position="74"/>
        <end position="98"/>
    </location>
</feature>
<feature type="disulfide bond" evidence="2">
    <location>
        <begin position="76"/>
        <end position="81"/>
    </location>
</feature>
<feature type="disulfide bond" evidence="1">
    <location>
        <begin position="130"/>
        <end position="159"/>
    </location>
</feature>
<feature type="disulfide bond" evidence="1">
    <location>
        <begin position="141"/>
        <end position="154"/>
    </location>
</feature>
<feature type="disulfide bond" evidence="1">
    <location>
        <begin position="143"/>
        <end position="149"/>
    </location>
</feature>
<feature type="disulfide bond" evidence="1">
    <location>
        <begin position="153"/>
        <end position="176"/>
    </location>
</feature>
<feature type="disulfide bond" evidence="1">
    <location>
        <begin position="167"/>
        <end position="173"/>
    </location>
</feature>
<feature type="disulfide bond" evidence="1">
    <location>
        <begin position="172"/>
        <end position="198"/>
    </location>
</feature>
<feature type="disulfide bond" evidence="4">
    <location>
        <begin position="185"/>
        <end position="205"/>
    </location>
</feature>
<feature type="disulfide bond" evidence="1">
    <location>
        <begin position="192"/>
        <end position="224"/>
    </location>
</feature>
<feature type="disulfide bond" evidence="1">
    <location>
        <begin position="217"/>
        <end position="229"/>
    </location>
</feature>
<feature type="disulfide bond" evidence="1">
    <location>
        <begin position="236"/>
        <end position="286"/>
    </location>
</feature>
<feature type="disulfide bond" evidence="1">
    <location>
        <begin position="251"/>
        <end position="295"/>
    </location>
</feature>
<feature type="disulfide bond" evidence="1">
    <location>
        <begin position="264"/>
        <end position="274"/>
    </location>
</feature>
<feature type="disulfide bond" evidence="1">
    <location>
        <begin position="281"/>
        <end position="315"/>
    </location>
</feature>
<feature type="non-terminal residue" evidence="9">
    <location>
        <position position="1"/>
    </location>
</feature>
<proteinExistence type="evidence at protein level"/>
<organism>
    <name type="scientific">Bothrops leucurus</name>
    <name type="common">Whitetail lancehead</name>
    <dbReference type="NCBI Taxonomy" id="157295"/>
    <lineage>
        <taxon>Eukaryota</taxon>
        <taxon>Metazoa</taxon>
        <taxon>Chordata</taxon>
        <taxon>Craniata</taxon>
        <taxon>Vertebrata</taxon>
        <taxon>Euteleostomi</taxon>
        <taxon>Lepidosauria</taxon>
        <taxon>Squamata</taxon>
        <taxon>Bifurcata</taxon>
        <taxon>Unidentata</taxon>
        <taxon>Episquamata</taxon>
        <taxon>Toxicofera</taxon>
        <taxon>Serpentes</taxon>
        <taxon>Colubroidea</taxon>
        <taxon>Viperidae</taxon>
        <taxon>Crotalinae</taxon>
        <taxon>Bothrops</taxon>
    </lineage>
</organism>
<accession>P86092</accession>
<name>VM3LB_BOTLC</name>
<dbReference type="EC" id="3.4.24.-"/>
<dbReference type="SMR" id="P86092"/>
<dbReference type="GO" id="GO:0005576">
    <property type="term" value="C:extracellular region"/>
    <property type="evidence" value="ECO:0000314"/>
    <property type="project" value="UniProtKB"/>
</dbReference>
<dbReference type="GO" id="GO:0005886">
    <property type="term" value="C:plasma membrane"/>
    <property type="evidence" value="ECO:0007669"/>
    <property type="project" value="TreeGrafter"/>
</dbReference>
<dbReference type="GO" id="GO:0046872">
    <property type="term" value="F:metal ion binding"/>
    <property type="evidence" value="ECO:0007669"/>
    <property type="project" value="UniProtKB-KW"/>
</dbReference>
<dbReference type="GO" id="GO:0004222">
    <property type="term" value="F:metalloendopeptidase activity"/>
    <property type="evidence" value="ECO:0000314"/>
    <property type="project" value="UniProtKB"/>
</dbReference>
<dbReference type="GO" id="GO:0090729">
    <property type="term" value="F:toxin activity"/>
    <property type="evidence" value="ECO:0000314"/>
    <property type="project" value="UniProtKB"/>
</dbReference>
<dbReference type="GO" id="GO:0006508">
    <property type="term" value="P:proteolysis"/>
    <property type="evidence" value="ECO:0007669"/>
    <property type="project" value="UniProtKB-KW"/>
</dbReference>
<dbReference type="GO" id="GO:0044523">
    <property type="term" value="P:venom-mediated disruption of extracellular matrix in another organism"/>
    <property type="evidence" value="ECO:0000314"/>
    <property type="project" value="UniProtKB"/>
</dbReference>
<dbReference type="GO" id="GO:0044485">
    <property type="term" value="P:venom-mediated fibrinogenolysis in another organism"/>
    <property type="evidence" value="ECO:0000314"/>
    <property type="project" value="UniProtKB"/>
</dbReference>
<dbReference type="CDD" id="cd04269">
    <property type="entry name" value="ZnMc_adamalysin_II_like"/>
    <property type="match status" value="1"/>
</dbReference>
<dbReference type="FunFam" id="4.10.70.10:FF:000001">
    <property type="entry name" value="Disintegrin and metalloproteinase domain-containing protein 22"/>
    <property type="match status" value="1"/>
</dbReference>
<dbReference type="Gene3D" id="3.40.390.10">
    <property type="entry name" value="Collagenase (Catalytic Domain)"/>
    <property type="match status" value="1"/>
</dbReference>
<dbReference type="Gene3D" id="4.10.70.10">
    <property type="entry name" value="Disintegrin domain"/>
    <property type="match status" value="1"/>
</dbReference>
<dbReference type="InterPro" id="IPR006586">
    <property type="entry name" value="ADAM_Cys-rich"/>
</dbReference>
<dbReference type="InterPro" id="IPR018358">
    <property type="entry name" value="Disintegrin_CS"/>
</dbReference>
<dbReference type="InterPro" id="IPR001762">
    <property type="entry name" value="Disintegrin_dom"/>
</dbReference>
<dbReference type="InterPro" id="IPR036436">
    <property type="entry name" value="Disintegrin_dom_sf"/>
</dbReference>
<dbReference type="InterPro" id="IPR024079">
    <property type="entry name" value="MetalloPept_cat_dom_sf"/>
</dbReference>
<dbReference type="InterPro" id="IPR001590">
    <property type="entry name" value="Peptidase_M12B"/>
</dbReference>
<dbReference type="InterPro" id="IPR034027">
    <property type="entry name" value="Reprolysin_adamalysin"/>
</dbReference>
<dbReference type="PANTHER" id="PTHR11905">
    <property type="entry name" value="ADAM A DISINTEGRIN AND METALLOPROTEASE DOMAIN"/>
    <property type="match status" value="1"/>
</dbReference>
<dbReference type="PANTHER" id="PTHR11905:SF32">
    <property type="entry name" value="DISINTEGRIN AND METALLOPROTEINASE DOMAIN-CONTAINING PROTEIN 28"/>
    <property type="match status" value="1"/>
</dbReference>
<dbReference type="Pfam" id="PF08516">
    <property type="entry name" value="ADAM_CR"/>
    <property type="match status" value="1"/>
</dbReference>
<dbReference type="Pfam" id="PF00200">
    <property type="entry name" value="Disintegrin"/>
    <property type="match status" value="1"/>
</dbReference>
<dbReference type="Pfam" id="PF01421">
    <property type="entry name" value="Reprolysin"/>
    <property type="match status" value="1"/>
</dbReference>
<dbReference type="PRINTS" id="PR00289">
    <property type="entry name" value="DISINTEGRIN"/>
</dbReference>
<dbReference type="SMART" id="SM00608">
    <property type="entry name" value="ACR"/>
    <property type="match status" value="1"/>
</dbReference>
<dbReference type="SMART" id="SM00050">
    <property type="entry name" value="DISIN"/>
    <property type="match status" value="1"/>
</dbReference>
<dbReference type="SUPFAM" id="SSF57552">
    <property type="entry name" value="Blood coagulation inhibitor (disintegrin)"/>
    <property type="match status" value="1"/>
</dbReference>
<dbReference type="SUPFAM" id="SSF55486">
    <property type="entry name" value="Metalloproteases ('zincins'), catalytic domain"/>
    <property type="match status" value="1"/>
</dbReference>
<dbReference type="PROSITE" id="PS50215">
    <property type="entry name" value="ADAM_MEPRO"/>
    <property type="match status" value="1"/>
</dbReference>
<dbReference type="PROSITE" id="PS00427">
    <property type="entry name" value="DISINTEGRIN_1"/>
    <property type="match status" value="1"/>
</dbReference>
<dbReference type="PROSITE" id="PS50214">
    <property type="entry name" value="DISINTEGRIN_2"/>
    <property type="match status" value="1"/>
</dbReference>
<dbReference type="PROSITE" id="PS00142">
    <property type="entry name" value="ZINC_PROTEASE"/>
    <property type="match status" value="1"/>
</dbReference>
<protein>
    <recommendedName>
        <fullName evidence="9">Zinc metalloproteinase leucurolysin-B</fullName>
        <shortName>Leuc-B</shortName>
        <ecNumber>3.4.24.-</ecNumber>
    </recommendedName>
    <alternativeName>
        <fullName>Snake venom metalloproteinase</fullName>
        <shortName>SVMP</shortName>
    </alternativeName>
</protein>
<evidence type="ECO:0000250" key="1"/>
<evidence type="ECO:0000250" key="2">
    <source>
        <dbReference type="UniProtKB" id="P28891"/>
    </source>
</evidence>
<evidence type="ECO:0000250" key="3">
    <source>
        <dbReference type="UniProtKB" id="P30431"/>
    </source>
</evidence>
<evidence type="ECO:0000255" key="4"/>
<evidence type="ECO:0000255" key="5">
    <source>
        <dbReference type="PROSITE-ProRule" id="PRU00068"/>
    </source>
</evidence>
<evidence type="ECO:0000255" key="6">
    <source>
        <dbReference type="PROSITE-ProRule" id="PRU00276"/>
    </source>
</evidence>
<evidence type="ECO:0000255" key="7">
    <source>
        <dbReference type="PROSITE-ProRule" id="PRU10095"/>
    </source>
</evidence>
<evidence type="ECO:0000269" key="8">
    <source>
    </source>
</evidence>
<evidence type="ECO:0000303" key="9">
    <source>
    </source>
</evidence>
<evidence type="ECO:0000305" key="10"/>
<evidence type="ECO:0000305" key="11">
    <source>
    </source>
</evidence>